<organism>
    <name type="scientific">Escherichia coli O157:H7</name>
    <dbReference type="NCBI Taxonomy" id="83334"/>
    <lineage>
        <taxon>Bacteria</taxon>
        <taxon>Pseudomonadati</taxon>
        <taxon>Pseudomonadota</taxon>
        <taxon>Gammaproteobacteria</taxon>
        <taxon>Enterobacterales</taxon>
        <taxon>Enterobacteriaceae</taxon>
        <taxon>Escherichia</taxon>
    </lineage>
</organism>
<name>SLYA_ECO57</name>
<gene>
    <name evidence="1" type="primary">slyA</name>
    <name type="ordered locus">Z2657</name>
    <name type="ordered locus">ECs2351</name>
</gene>
<accession>P0A8W3</accession>
<accession>P55740</accession>
<dbReference type="EMBL" id="AE005174">
    <property type="protein sequence ID" value="AAG56631.1"/>
    <property type="status" value="ALT_INIT"/>
    <property type="molecule type" value="Genomic_DNA"/>
</dbReference>
<dbReference type="EMBL" id="BA000007">
    <property type="protein sequence ID" value="BAB35774.2"/>
    <property type="molecule type" value="Genomic_DNA"/>
</dbReference>
<dbReference type="PIR" id="C85771">
    <property type="entry name" value="C85771"/>
</dbReference>
<dbReference type="PIR" id="G90922">
    <property type="entry name" value="G90922"/>
</dbReference>
<dbReference type="RefSeq" id="NP_310378.2">
    <property type="nucleotide sequence ID" value="NC_002695.1"/>
</dbReference>
<dbReference type="RefSeq" id="WP_001296943.1">
    <property type="nucleotide sequence ID" value="NZ_VOAI01000007.1"/>
</dbReference>
<dbReference type="SMR" id="P0A8W3"/>
<dbReference type="STRING" id="155864.Z2657"/>
<dbReference type="GeneID" id="912735"/>
<dbReference type="GeneID" id="93775796"/>
<dbReference type="KEGG" id="ece:Z2657"/>
<dbReference type="KEGG" id="ecs:ECs_2351"/>
<dbReference type="PATRIC" id="fig|386585.9.peg.2460"/>
<dbReference type="eggNOG" id="COG1846">
    <property type="taxonomic scope" value="Bacteria"/>
</dbReference>
<dbReference type="HOGENOM" id="CLU_083287_18_2_6"/>
<dbReference type="OMA" id="DEHRFGM"/>
<dbReference type="Proteomes" id="UP000000558">
    <property type="component" value="Chromosome"/>
</dbReference>
<dbReference type="Proteomes" id="UP000002519">
    <property type="component" value="Chromosome"/>
</dbReference>
<dbReference type="GO" id="GO:0003677">
    <property type="term" value="F:DNA binding"/>
    <property type="evidence" value="ECO:0007669"/>
    <property type="project" value="UniProtKB-UniRule"/>
</dbReference>
<dbReference type="GO" id="GO:0003700">
    <property type="term" value="F:DNA-binding transcription factor activity"/>
    <property type="evidence" value="ECO:0007669"/>
    <property type="project" value="UniProtKB-UniRule"/>
</dbReference>
<dbReference type="GO" id="GO:0006950">
    <property type="term" value="P:response to stress"/>
    <property type="evidence" value="ECO:0007669"/>
    <property type="project" value="TreeGrafter"/>
</dbReference>
<dbReference type="FunFam" id="1.10.10.10:FF:000261">
    <property type="entry name" value="Transcriptional regulator SlyA"/>
    <property type="match status" value="1"/>
</dbReference>
<dbReference type="Gene3D" id="1.10.10.10">
    <property type="entry name" value="Winged helix-like DNA-binding domain superfamily/Winged helix DNA-binding domain"/>
    <property type="match status" value="1"/>
</dbReference>
<dbReference type="HAMAP" id="MF_01819">
    <property type="entry name" value="HTH_type_SlyA"/>
    <property type="match status" value="1"/>
</dbReference>
<dbReference type="InterPro" id="IPR000835">
    <property type="entry name" value="HTH_MarR-typ"/>
</dbReference>
<dbReference type="InterPro" id="IPR039422">
    <property type="entry name" value="MarR/SlyA-like"/>
</dbReference>
<dbReference type="InterPro" id="IPR023187">
    <property type="entry name" value="Tscrpt_reg_MarR-type_CS"/>
</dbReference>
<dbReference type="InterPro" id="IPR023071">
    <property type="entry name" value="Tscrpt_reg_SlyA"/>
</dbReference>
<dbReference type="InterPro" id="IPR036388">
    <property type="entry name" value="WH-like_DNA-bd_sf"/>
</dbReference>
<dbReference type="InterPro" id="IPR036390">
    <property type="entry name" value="WH_DNA-bd_sf"/>
</dbReference>
<dbReference type="NCBIfam" id="NF002926">
    <property type="entry name" value="PRK03573.1"/>
    <property type="match status" value="1"/>
</dbReference>
<dbReference type="PANTHER" id="PTHR33164:SF64">
    <property type="entry name" value="TRANSCRIPTIONAL REGULATOR SLYA"/>
    <property type="match status" value="1"/>
</dbReference>
<dbReference type="PANTHER" id="PTHR33164">
    <property type="entry name" value="TRANSCRIPTIONAL REGULATOR, MARR FAMILY"/>
    <property type="match status" value="1"/>
</dbReference>
<dbReference type="Pfam" id="PF01047">
    <property type="entry name" value="MarR"/>
    <property type="match status" value="1"/>
</dbReference>
<dbReference type="PRINTS" id="PR00598">
    <property type="entry name" value="HTHMARR"/>
</dbReference>
<dbReference type="SMART" id="SM00347">
    <property type="entry name" value="HTH_MARR"/>
    <property type="match status" value="1"/>
</dbReference>
<dbReference type="SUPFAM" id="SSF46785">
    <property type="entry name" value="Winged helix' DNA-binding domain"/>
    <property type="match status" value="1"/>
</dbReference>
<dbReference type="PROSITE" id="PS01117">
    <property type="entry name" value="HTH_MARR_1"/>
    <property type="match status" value="1"/>
</dbReference>
<dbReference type="PROSITE" id="PS50995">
    <property type="entry name" value="HTH_MARR_2"/>
    <property type="match status" value="1"/>
</dbReference>
<evidence type="ECO:0000255" key="1">
    <source>
        <dbReference type="HAMAP-Rule" id="MF_01819"/>
    </source>
</evidence>
<evidence type="ECO:0000305" key="2"/>
<comment type="function">
    <text evidence="1">Transcription regulator that can specifically activate or repress expression of target genes.</text>
</comment>
<comment type="subunit">
    <text evidence="1">Homodimer.</text>
</comment>
<comment type="similarity">
    <text evidence="1">Belongs to the SlyA family.</text>
</comment>
<comment type="sequence caution" evidence="2">
    <conflict type="erroneous initiation">
        <sequence resource="EMBL-CDS" id="AAG56631"/>
    </conflict>
    <text>Extended N-terminus.</text>
</comment>
<proteinExistence type="inferred from homology"/>
<reference key="1">
    <citation type="journal article" date="2001" name="Nature">
        <title>Genome sequence of enterohaemorrhagic Escherichia coli O157:H7.</title>
        <authorList>
            <person name="Perna N.T."/>
            <person name="Plunkett G. III"/>
            <person name="Burland V."/>
            <person name="Mau B."/>
            <person name="Glasner J.D."/>
            <person name="Rose D.J."/>
            <person name="Mayhew G.F."/>
            <person name="Evans P.S."/>
            <person name="Gregor J."/>
            <person name="Kirkpatrick H.A."/>
            <person name="Posfai G."/>
            <person name="Hackett J."/>
            <person name="Klink S."/>
            <person name="Boutin A."/>
            <person name="Shao Y."/>
            <person name="Miller L."/>
            <person name="Grotbeck E.J."/>
            <person name="Davis N.W."/>
            <person name="Lim A."/>
            <person name="Dimalanta E.T."/>
            <person name="Potamousis K."/>
            <person name="Apodaca J."/>
            <person name="Anantharaman T.S."/>
            <person name="Lin J."/>
            <person name="Yen G."/>
            <person name="Schwartz D.C."/>
            <person name="Welch R.A."/>
            <person name="Blattner F.R."/>
        </authorList>
    </citation>
    <scope>NUCLEOTIDE SEQUENCE [LARGE SCALE GENOMIC DNA]</scope>
    <source>
        <strain>O157:H7 / EDL933 / ATCC 700927 / EHEC</strain>
    </source>
</reference>
<reference key="2">
    <citation type="journal article" date="2001" name="DNA Res.">
        <title>Complete genome sequence of enterohemorrhagic Escherichia coli O157:H7 and genomic comparison with a laboratory strain K-12.</title>
        <authorList>
            <person name="Hayashi T."/>
            <person name="Makino K."/>
            <person name="Ohnishi M."/>
            <person name="Kurokawa K."/>
            <person name="Ishii K."/>
            <person name="Yokoyama K."/>
            <person name="Han C.-G."/>
            <person name="Ohtsubo E."/>
            <person name="Nakayama K."/>
            <person name="Murata T."/>
            <person name="Tanaka M."/>
            <person name="Tobe T."/>
            <person name="Iida T."/>
            <person name="Takami H."/>
            <person name="Honda T."/>
            <person name="Sasakawa C."/>
            <person name="Ogasawara N."/>
            <person name="Yasunaga T."/>
            <person name="Kuhara S."/>
            <person name="Shiba T."/>
            <person name="Hattori M."/>
            <person name="Shinagawa H."/>
        </authorList>
    </citation>
    <scope>NUCLEOTIDE SEQUENCE [LARGE SCALE GENOMIC DNA]</scope>
    <source>
        <strain>O157:H7 / Sakai / RIMD 0509952 / EHEC</strain>
    </source>
</reference>
<feature type="chain" id="PRO_0000054384" description="Transcriptional regulator SlyA">
    <location>
        <begin position="1"/>
        <end position="144"/>
    </location>
</feature>
<feature type="domain" description="HTH marR-type" evidence="1">
    <location>
        <begin position="2"/>
        <end position="135"/>
    </location>
</feature>
<feature type="DNA-binding region" description="H-T-H motif" evidence="1">
    <location>
        <begin position="49"/>
        <end position="72"/>
    </location>
</feature>
<protein>
    <recommendedName>
        <fullName evidence="1">Transcriptional regulator SlyA</fullName>
    </recommendedName>
</protein>
<keyword id="KW-0010">Activator</keyword>
<keyword id="KW-0238">DNA-binding</keyword>
<keyword id="KW-1185">Reference proteome</keyword>
<keyword id="KW-0678">Repressor</keyword>
<keyword id="KW-0804">Transcription</keyword>
<keyword id="KW-0805">Transcription regulation</keyword>
<keyword id="KW-0843">Virulence</keyword>
<sequence length="144" mass="16353">MESPLGSDLARLVRIWRALIDHRLKPLELTQTHWVTLHNIHQLPPDQSQIQLAKAIGIEQPSLVRTLDQLEEKGLISRQTCASDRRAKRIKLTEKAEPLISEMEAVINKTRAEILHGISAEELEQLITLIAKLEHNIIELQAKG</sequence>